<organism>
    <name type="scientific">Cannabis sativa</name>
    <name type="common">Hemp</name>
    <name type="synonym">Marijuana</name>
    <dbReference type="NCBI Taxonomy" id="3483"/>
    <lineage>
        <taxon>Eukaryota</taxon>
        <taxon>Viridiplantae</taxon>
        <taxon>Streptophyta</taxon>
        <taxon>Embryophyta</taxon>
        <taxon>Tracheophyta</taxon>
        <taxon>Spermatophyta</taxon>
        <taxon>Magnoliopsida</taxon>
        <taxon>eudicotyledons</taxon>
        <taxon>Gunneridae</taxon>
        <taxon>Pentapetalae</taxon>
        <taxon>rosids</taxon>
        <taxon>fabids</taxon>
        <taxon>Rosales</taxon>
        <taxon>Cannabaceae</taxon>
        <taxon>Cannabis</taxon>
    </lineage>
</organism>
<feature type="signal peptide" evidence="3">
    <location>
        <begin position="1"/>
        <end position="28"/>
    </location>
</feature>
<feature type="chain" id="PRO_0000421146" description="Cannabidiolic acid synthase-like 2">
    <location>
        <begin position="29"/>
        <end position="545"/>
    </location>
</feature>
<feature type="domain" description="FAD-binding PCMH-type" evidence="4">
    <location>
        <begin position="77"/>
        <end position="251"/>
    </location>
</feature>
<feature type="active site" description="Proton acceptor" evidence="1">
    <location>
        <position position="484"/>
    </location>
</feature>
<feature type="binding site" evidence="1">
    <location>
        <position position="292"/>
    </location>
    <ligand>
        <name>substrate</name>
    </ligand>
</feature>
<feature type="binding site" evidence="1">
    <location>
        <position position="417"/>
    </location>
    <ligand>
        <name>substrate</name>
    </ligand>
</feature>
<feature type="glycosylation site" description="N-linked (GlcNAc...) asparagine" evidence="3">
    <location>
        <position position="45"/>
    </location>
</feature>
<feature type="glycosylation site" description="N-linked (GlcNAc...) asparagine" evidence="3">
    <location>
        <position position="65"/>
    </location>
</feature>
<feature type="glycosylation site" description="N-linked (GlcNAc...) asparagine" evidence="3">
    <location>
        <position position="89"/>
    </location>
</feature>
<feature type="glycosylation site" description="N-linked (GlcNAc...) asparagine" evidence="3">
    <location>
        <position position="168"/>
    </location>
</feature>
<feature type="glycosylation site" description="N-linked (GlcNAc...) asparagine" evidence="3">
    <location>
        <position position="297"/>
    </location>
</feature>
<feature type="glycosylation site" description="N-linked (GlcNAc...) asparagine" evidence="3">
    <location>
        <position position="305"/>
    </location>
</feature>
<feature type="glycosylation site" description="N-linked (GlcNAc...) asparagine" evidence="3">
    <location>
        <position position="329"/>
    </location>
</feature>
<feature type="glycosylation site" description="N-linked (GlcNAc...) asparagine" evidence="3">
    <location>
        <position position="361"/>
    </location>
</feature>
<feature type="glycosylation site" description="N-linked (GlcNAc...) asparagine" evidence="3">
    <location>
        <position position="467"/>
    </location>
</feature>
<feature type="glycosylation site" description="N-linked (GlcNAc...) asparagine" evidence="3">
    <location>
        <position position="499"/>
    </location>
</feature>
<feature type="disulfide bond" evidence="1">
    <location>
        <begin position="37"/>
        <end position="99"/>
    </location>
</feature>
<feature type="cross-link" description="6-(S-cysteinyl)-8alpha-(pros-histidyl)-FAD (His-Cys)" evidence="2">
    <location>
        <begin position="114"/>
        <end position="176"/>
    </location>
</feature>
<comment type="function">
    <text evidence="5">Has no cannabidiolic acid synthase activity.</text>
</comment>
<comment type="cofactor">
    <cofactor evidence="2">
        <name>FAD</name>
        <dbReference type="ChEBI" id="CHEBI:57692"/>
    </cofactor>
    <text evidence="2">Binds 1 FAD per subunit in a bicovalent manner.</text>
</comment>
<comment type="subcellular location">
    <subcellularLocation>
        <location evidence="1">Secreted</location>
    </subcellularLocation>
</comment>
<comment type="PTM">
    <text evidence="2">The FAD cofactor is bound via a bicovalent 6-S-cysteinyl, 8alpha-N1-histidyl FAD linkage.</text>
</comment>
<comment type="similarity">
    <text evidence="6">Belongs to the oxygen-dependent FAD-linked oxidoreductase family.</text>
</comment>
<keyword id="KW-1015">Disulfide bond</keyword>
<keyword id="KW-0274">FAD</keyword>
<keyword id="KW-0285">Flavoprotein</keyword>
<keyword id="KW-0325">Glycoprotein</keyword>
<keyword id="KW-0964">Secreted</keyword>
<keyword id="KW-0732">Signal</keyword>
<protein>
    <recommendedName>
        <fullName>Cannabidiolic acid synthase-like 2</fullName>
    </recommendedName>
</protein>
<reference key="1">
    <citation type="journal article" date="2007" name="FEBS Lett.">
        <title>Cannabidiolic-acid synthase, the chemotype-determining enzyme in the fiber-type Cannabis sativa.</title>
        <authorList>
            <person name="Taura F."/>
            <person name="Sirikantaramas S."/>
            <person name="Shoyama Y."/>
            <person name="Yoshikai K."/>
            <person name="Shoyama Y."/>
            <person name="Morimoto S."/>
        </authorList>
    </citation>
    <scope>NUCLEOTIDE SEQUENCE [MRNA]</scope>
    <scope>FUNCTION</scope>
</reference>
<dbReference type="EMBL" id="AB292684">
    <property type="protein sequence ID" value="BAF65035.1"/>
    <property type="molecule type" value="mRNA"/>
</dbReference>
<dbReference type="SMR" id="A6P6W1"/>
<dbReference type="GlyCosmos" id="A6P6W1">
    <property type="glycosylation" value="10 sites, No reported glycans"/>
</dbReference>
<dbReference type="Proteomes" id="UP000596661">
    <property type="component" value="Unplaced"/>
</dbReference>
<dbReference type="GO" id="GO:0005576">
    <property type="term" value="C:extracellular region"/>
    <property type="evidence" value="ECO:0007669"/>
    <property type="project" value="UniProtKB-SubCell"/>
</dbReference>
<dbReference type="GO" id="GO:0071949">
    <property type="term" value="F:FAD binding"/>
    <property type="evidence" value="ECO:0007669"/>
    <property type="project" value="InterPro"/>
</dbReference>
<dbReference type="GO" id="GO:0016491">
    <property type="term" value="F:oxidoreductase activity"/>
    <property type="evidence" value="ECO:0007669"/>
    <property type="project" value="InterPro"/>
</dbReference>
<dbReference type="FunFam" id="3.30.43.10:FF:000004">
    <property type="entry name" value="Berberine bridge enzyme-like 15"/>
    <property type="match status" value="1"/>
</dbReference>
<dbReference type="Gene3D" id="3.30.465.10">
    <property type="match status" value="1"/>
</dbReference>
<dbReference type="Gene3D" id="3.40.462.20">
    <property type="match status" value="1"/>
</dbReference>
<dbReference type="Gene3D" id="3.30.43.10">
    <property type="entry name" value="Uridine Diphospho-n-acetylenolpyruvylglucosamine Reductase, domain 2"/>
    <property type="match status" value="1"/>
</dbReference>
<dbReference type="InterPro" id="IPR012951">
    <property type="entry name" value="BBE"/>
</dbReference>
<dbReference type="InterPro" id="IPR016166">
    <property type="entry name" value="FAD-bd_PCMH"/>
</dbReference>
<dbReference type="InterPro" id="IPR036318">
    <property type="entry name" value="FAD-bd_PCMH-like_sf"/>
</dbReference>
<dbReference type="InterPro" id="IPR016167">
    <property type="entry name" value="FAD-bd_PCMH_sub1"/>
</dbReference>
<dbReference type="InterPro" id="IPR016169">
    <property type="entry name" value="FAD-bd_PCMH_sub2"/>
</dbReference>
<dbReference type="InterPro" id="IPR006094">
    <property type="entry name" value="Oxid_FAD_bind_N"/>
</dbReference>
<dbReference type="PANTHER" id="PTHR32448">
    <property type="entry name" value="OS08G0158400 PROTEIN"/>
    <property type="match status" value="1"/>
</dbReference>
<dbReference type="Pfam" id="PF08031">
    <property type="entry name" value="BBE"/>
    <property type="match status" value="1"/>
</dbReference>
<dbReference type="Pfam" id="PF01565">
    <property type="entry name" value="FAD_binding_4"/>
    <property type="match status" value="1"/>
</dbReference>
<dbReference type="SUPFAM" id="SSF56176">
    <property type="entry name" value="FAD-binding/transporter-associated domain-like"/>
    <property type="match status" value="1"/>
</dbReference>
<dbReference type="PROSITE" id="PS51387">
    <property type="entry name" value="FAD_PCMH"/>
    <property type="match status" value="1"/>
</dbReference>
<evidence type="ECO:0000250" key="1"/>
<evidence type="ECO:0000250" key="2">
    <source>
        <dbReference type="UniProtKB" id="Q8GTB6"/>
    </source>
</evidence>
<evidence type="ECO:0000255" key="3"/>
<evidence type="ECO:0000255" key="4">
    <source>
        <dbReference type="PROSITE-ProRule" id="PRU00718"/>
    </source>
</evidence>
<evidence type="ECO:0000269" key="5">
    <source>
    </source>
</evidence>
<evidence type="ECO:0000305" key="6"/>
<gene>
    <name type="primary">CBDAS3</name>
</gene>
<proteinExistence type="evidence at transcript level"/>
<name>CASL2_CANSA</name>
<sequence length="545" mass="62296">MKCSTFCFWYVCKIIFFFLSFNIQISIANPQENFLKCLSQYIPTNVTNAKLVYTQHDQFYMSILNSTVQNLRFTSDTTPKPLVITTPLNVSHIQGTILCSKKVGLQIRTRSGGHDAEGMSYISQVPFVIVDLRNMHSVKIDVHSQTAWVESGATLGEVYYWINENNENLSFPAGYCPTVGTGGHFSGGGYGALMRNYGLAADNIIDAHLVNVDGKVLDRKSMGEDLFWAIRGGGGENFGIIAAWKIRLVAVPSMSTIFSVKKNMEIHELVKLVNKWQNIAYMYEKELLLFTHFITRNITDNQGKNKTTIHSYFSSIFHGGVDSLVDLMNKSFPELGIKKTDCKQLSWIDTIIFYSGVVNYNTTNFKKEILLDRSGGRKAAFSIKLDYVKKPIPETAMVTILEKLYEEDVGVGMFVFYPYGGIMDEISESAIPFPHRAGITYEIWYIASWEKQEDNEKHINWIRNVYNFTTPYVSQNPRMAYLNYRDLDLGKTNFESPNNYTQARIWGEKYFGKNFNRLVKVKTKVDPDNFFRNEQSIPPLPLRHH</sequence>
<accession>A6P6W1</accession>